<sequence>MREFGNPLGDRPPLDELARTDLLLDALAEREEVDFADPRDDALAALLGQWRDDLRWPPASALVSQDEAVAALRAGVAQRRRARRSLAAVGSVAAALLVLSGFGAVVADARPGDLLYGLHAMMFNRSRVSDDQIVLSAKANLAKVEQMIAQGQWAEAQDELAEVSSTVQAVTDGSRRQDLINEVNLLNTKVETRDPNATLRPGSPSNPAAPGSVGNSWTPLAPVVEPPTPPTPASAAEPSMSAGVSESPMPNSTSTVAASPSTPSSKPEPGSIDPSLEPADEATNPAGQPAPETPVSPTH</sequence>
<dbReference type="EMBL" id="LT708304">
    <property type="protein sequence ID" value="SIU02075.1"/>
    <property type="molecule type" value="Genomic_DNA"/>
</dbReference>
<dbReference type="RefSeq" id="NP_857087.1">
    <property type="nucleotide sequence ID" value="NC_002945.3"/>
</dbReference>
<dbReference type="RefSeq" id="WP_003418011.1">
    <property type="nucleotide sequence ID" value="NC_002945.4"/>
</dbReference>
<dbReference type="SMR" id="P65082"/>
<dbReference type="KEGG" id="mbo:BQ2027_MB3447C"/>
<dbReference type="PATRIC" id="fig|233413.5.peg.3782"/>
<dbReference type="Proteomes" id="UP000001419">
    <property type="component" value="Chromosome"/>
</dbReference>
<dbReference type="GO" id="GO:0005886">
    <property type="term" value="C:plasma membrane"/>
    <property type="evidence" value="ECO:0007669"/>
    <property type="project" value="UniProtKB-SubCell"/>
</dbReference>
<dbReference type="Gene3D" id="6.10.250.1300">
    <property type="match status" value="1"/>
</dbReference>
<dbReference type="InterPro" id="IPR031928">
    <property type="entry name" value="RsdA_SigD-bd"/>
</dbReference>
<dbReference type="Pfam" id="PF16751">
    <property type="entry name" value="RsdA_SigD_bd"/>
    <property type="match status" value="1"/>
</dbReference>
<evidence type="ECO:0000250" key="1"/>
<evidence type="ECO:0000255" key="2"/>
<evidence type="ECO:0000256" key="3">
    <source>
        <dbReference type="SAM" id="MobiDB-lite"/>
    </source>
</evidence>
<evidence type="ECO:0000305" key="4"/>
<protein>
    <recommendedName>
        <fullName>Anti-sigma-D factor RsdA</fullName>
    </recommendedName>
    <alternativeName>
        <fullName>Regulator of SigD</fullName>
    </alternativeName>
    <alternativeName>
        <fullName>Sigma-D anti-sigma factor RsdA</fullName>
    </alternativeName>
</protein>
<organism>
    <name type="scientific">Mycobacterium bovis (strain ATCC BAA-935 / AF2122/97)</name>
    <dbReference type="NCBI Taxonomy" id="233413"/>
    <lineage>
        <taxon>Bacteria</taxon>
        <taxon>Bacillati</taxon>
        <taxon>Actinomycetota</taxon>
        <taxon>Actinomycetes</taxon>
        <taxon>Mycobacteriales</taxon>
        <taxon>Mycobacteriaceae</taxon>
        <taxon>Mycobacterium</taxon>
        <taxon>Mycobacterium tuberculosis complex</taxon>
    </lineage>
</organism>
<feature type="chain" id="PRO_0000104134" description="Anti-sigma-D factor RsdA">
    <location>
        <begin position="1"/>
        <end position="299"/>
    </location>
</feature>
<feature type="transmembrane region" description="Helical" evidence="2">
    <location>
        <begin position="86"/>
        <end position="106"/>
    </location>
</feature>
<feature type="region of interest" description="Disordered" evidence="3">
    <location>
        <begin position="187"/>
        <end position="299"/>
    </location>
</feature>
<feature type="compositionally biased region" description="Low complexity" evidence="3">
    <location>
        <begin position="201"/>
        <end position="212"/>
    </location>
</feature>
<feature type="compositionally biased region" description="Low complexity" evidence="3">
    <location>
        <begin position="250"/>
        <end position="271"/>
    </location>
</feature>
<accession>P65082</accession>
<accession>A0A1R3Y5T9</accession>
<accession>Q50713</accession>
<accession>X2BNM8</accession>
<reference key="1">
    <citation type="journal article" date="2003" name="Proc. Natl. Acad. Sci. U.S.A.">
        <title>The complete genome sequence of Mycobacterium bovis.</title>
        <authorList>
            <person name="Garnier T."/>
            <person name="Eiglmeier K."/>
            <person name="Camus J.-C."/>
            <person name="Medina N."/>
            <person name="Mansoor H."/>
            <person name="Pryor M."/>
            <person name="Duthoy S."/>
            <person name="Grondin S."/>
            <person name="Lacroix C."/>
            <person name="Monsempe C."/>
            <person name="Simon S."/>
            <person name="Harris B."/>
            <person name="Atkin R."/>
            <person name="Doggett J."/>
            <person name="Mayes R."/>
            <person name="Keating L."/>
            <person name="Wheeler P.R."/>
            <person name="Parkhill J."/>
            <person name="Barrell B.G."/>
            <person name="Cole S.T."/>
            <person name="Gordon S.V."/>
            <person name="Hewinson R.G."/>
        </authorList>
    </citation>
    <scope>NUCLEOTIDE SEQUENCE [LARGE SCALE GENOMIC DNA]</scope>
    <source>
        <strain>ATCC BAA-935 / AF2122/97</strain>
    </source>
</reference>
<reference key="2">
    <citation type="journal article" date="2017" name="Genome Announc.">
        <title>Updated reference genome sequence and annotation of Mycobacterium bovis AF2122/97.</title>
        <authorList>
            <person name="Malone K.M."/>
            <person name="Farrell D."/>
            <person name="Stuber T.P."/>
            <person name="Schubert O.T."/>
            <person name="Aebersold R."/>
            <person name="Robbe-Austerman S."/>
            <person name="Gordon S.V."/>
        </authorList>
    </citation>
    <scope>NUCLEOTIDE SEQUENCE [LARGE SCALE GENOMIC DNA]</scope>
    <scope>GENOME REANNOTATION</scope>
    <source>
        <strain>ATCC BAA-935 / AF2122/97</strain>
    </source>
</reference>
<gene>
    <name type="primary">rsda</name>
    <name type="ordered locus">BQ2027_MB3447C</name>
</gene>
<keyword id="KW-1003">Cell membrane</keyword>
<keyword id="KW-0472">Membrane</keyword>
<keyword id="KW-1185">Reference proteome</keyword>
<keyword id="KW-0804">Transcription</keyword>
<keyword id="KW-0805">Transcription regulation</keyword>
<keyword id="KW-0812">Transmembrane</keyword>
<keyword id="KW-1133">Transmembrane helix</keyword>
<comment type="function">
    <text evidence="1">An anti-sigma factor for extracytoplasmic function (ECF) sigma factor SigD. ECF sigma factors are held in an inactive form by an anti-sigma factor until released by regulated intramembrane proteolysis (RIP). RIP occurs when an extracytoplasmic signal triggers a concerted proteolytic cascade to transmit information and elicit cellular responses. The membrane-spanning regulatory substrate protein is first cut extracytoplasmically (site-1 protease, S1P), then within the membrane itself (site-2 protease, S2P), while cytoplasmic proteases finish degrading the regulatory protein, liberating the sigma factor. Neither S1P nor S2P proteases have been so far identified for this anti-sigma factor (By similarity).</text>
</comment>
<comment type="subunit">
    <text evidence="1">Interacts with ECF RNA polymerase sigma factor SigD; this should inhibit the interaction of SigD with the RNA polymerase catalytic core.</text>
</comment>
<comment type="subcellular location">
    <subcellularLocation>
        <location evidence="4">Cell membrane</location>
        <topology evidence="4">Single-pass membrane protein</topology>
    </subcellularLocation>
</comment>
<comment type="domain">
    <text evidence="1">The cytosolic domain interacts with ECF sigma factor SigD.</text>
</comment>
<comment type="PTM">
    <text evidence="1">The cytosolic fragment is degraded by a ClpP1-ClpP2-ClpX complex, as would be expected after S1P and S2P intramembrane proteolysis. This releases SigD so that it may bind to the RNA polymerase catalytic core (By similarity).</text>
</comment>
<proteinExistence type="inferred from homology"/>
<name>RSDA_MYCBO</name>